<dbReference type="EMBL" id="Y14084">
    <property type="protein sequence ID" value="CAA74544.1"/>
    <property type="molecule type" value="Genomic_DNA"/>
</dbReference>
<dbReference type="EMBL" id="AL009126">
    <property type="protein sequence ID" value="CAB12877.1"/>
    <property type="molecule type" value="Genomic_DNA"/>
</dbReference>
<dbReference type="PIR" id="B69832">
    <property type="entry name" value="B69832"/>
</dbReference>
<dbReference type="RefSeq" id="NP_388918.1">
    <property type="nucleotide sequence ID" value="NC_000964.3"/>
</dbReference>
<dbReference type="RefSeq" id="WP_003233151.1">
    <property type="nucleotide sequence ID" value="NZ_OZ025638.1"/>
</dbReference>
<dbReference type="SMR" id="O07620"/>
<dbReference type="FunCoup" id="O07620">
    <property type="interactions" value="301"/>
</dbReference>
<dbReference type="STRING" id="224308.BSU10370"/>
<dbReference type="TCDB" id="2.A.88.1.9">
    <property type="family name" value="the vitamin uptake transporter (vut) family"/>
</dbReference>
<dbReference type="PaxDb" id="224308-BSU10370"/>
<dbReference type="EnsemblBacteria" id="CAB12877">
    <property type="protein sequence ID" value="CAB12877"/>
    <property type="gene ID" value="BSU_10370"/>
</dbReference>
<dbReference type="GeneID" id="939321"/>
<dbReference type="KEGG" id="bsu:BSU10370"/>
<dbReference type="PATRIC" id="fig|224308.43.peg.1082"/>
<dbReference type="eggNOG" id="COG1268">
    <property type="taxonomic scope" value="Bacteria"/>
</dbReference>
<dbReference type="InParanoid" id="O07620"/>
<dbReference type="OrthoDB" id="9803495at2"/>
<dbReference type="PhylomeDB" id="O07620"/>
<dbReference type="BioCyc" id="BSUB:BSU10370-MONOMER"/>
<dbReference type="Proteomes" id="UP000001570">
    <property type="component" value="Chromosome"/>
</dbReference>
<dbReference type="GO" id="GO:0005886">
    <property type="term" value="C:plasma membrane"/>
    <property type="evidence" value="ECO:0007669"/>
    <property type="project" value="UniProtKB-SubCell"/>
</dbReference>
<dbReference type="GO" id="GO:0015225">
    <property type="term" value="F:biotin transmembrane transporter activity"/>
    <property type="evidence" value="ECO:0007669"/>
    <property type="project" value="InterPro"/>
</dbReference>
<dbReference type="Gene3D" id="1.10.1760.20">
    <property type="match status" value="1"/>
</dbReference>
<dbReference type="InterPro" id="IPR003784">
    <property type="entry name" value="BioY"/>
</dbReference>
<dbReference type="PANTHER" id="PTHR34295">
    <property type="entry name" value="BIOTIN TRANSPORTER BIOY"/>
    <property type="match status" value="1"/>
</dbReference>
<dbReference type="PANTHER" id="PTHR34295:SF4">
    <property type="entry name" value="BIOTIN TRANSPORTER BIOY-RELATED"/>
    <property type="match status" value="1"/>
</dbReference>
<dbReference type="Pfam" id="PF02632">
    <property type="entry name" value="BioY"/>
    <property type="match status" value="1"/>
</dbReference>
<dbReference type="PIRSF" id="PIRSF016661">
    <property type="entry name" value="BioY"/>
    <property type="match status" value="1"/>
</dbReference>
<evidence type="ECO:0000250" key="1"/>
<evidence type="ECO:0000255" key="2"/>
<evidence type="ECO:0000269" key="3">
    <source>
    </source>
</evidence>
<evidence type="ECO:0000305" key="4"/>
<comment type="function">
    <text evidence="1">Probable biotin transporter.</text>
</comment>
<comment type="subcellular location">
    <subcellularLocation>
        <location evidence="4">Cell membrane</location>
        <topology evidence="4">Multi-pass membrane protein</topology>
    </subcellularLocation>
</comment>
<comment type="induction">
    <text evidence="3">Repressed by presence of biotin, under control of BirA. Probably part of the bioY-yhfST operon.</text>
</comment>
<comment type="similarity">
    <text evidence="4">Belongs to the BioY family.</text>
</comment>
<name>BIOY_BACSU</name>
<accession>O07620</accession>
<accession>Q796T2</accession>
<keyword id="KW-1003">Cell membrane</keyword>
<keyword id="KW-0472">Membrane</keyword>
<keyword id="KW-1185">Reference proteome</keyword>
<keyword id="KW-0812">Transmembrane</keyword>
<keyword id="KW-1133">Transmembrane helix</keyword>
<keyword id="KW-0813">Transport</keyword>
<protein>
    <recommendedName>
        <fullName>Probable biotin transporter BioY</fullName>
    </recommendedName>
</protein>
<organism>
    <name type="scientific">Bacillus subtilis (strain 168)</name>
    <dbReference type="NCBI Taxonomy" id="224308"/>
    <lineage>
        <taxon>Bacteria</taxon>
        <taxon>Bacillati</taxon>
        <taxon>Bacillota</taxon>
        <taxon>Bacilli</taxon>
        <taxon>Bacillales</taxon>
        <taxon>Bacillaceae</taxon>
        <taxon>Bacillus</taxon>
    </lineage>
</organism>
<proteinExistence type="evidence at transcript level"/>
<gene>
    <name type="primary">bioY</name>
    <name type="synonym">yhfU</name>
    <name type="ordered locus">BSU10370</name>
</gene>
<reference key="1">
    <citation type="journal article" date="1998" name="Microbiology">
        <title>The 172 kb prkA-addAB region from 83 degrees to 97 degrees of the Bacillus subtilis chromosome contains several dysfunctional genes, the glyB marker, many genes encoding transporter proteins, and the ubiquitous hit gene.</title>
        <authorList>
            <person name="Noback M.A."/>
            <person name="Holsappel S."/>
            <person name="Kiewiet R."/>
            <person name="Terpstra P."/>
            <person name="Wambutt R."/>
            <person name="Wedler H."/>
            <person name="Venema G."/>
            <person name="Bron S."/>
        </authorList>
    </citation>
    <scope>NUCLEOTIDE SEQUENCE [GENOMIC DNA]</scope>
    <source>
        <strain>168</strain>
    </source>
</reference>
<reference key="2">
    <citation type="journal article" date="1997" name="Nature">
        <title>The complete genome sequence of the Gram-positive bacterium Bacillus subtilis.</title>
        <authorList>
            <person name="Kunst F."/>
            <person name="Ogasawara N."/>
            <person name="Moszer I."/>
            <person name="Albertini A.M."/>
            <person name="Alloni G."/>
            <person name="Azevedo V."/>
            <person name="Bertero M.G."/>
            <person name="Bessieres P."/>
            <person name="Bolotin A."/>
            <person name="Borchert S."/>
            <person name="Borriss R."/>
            <person name="Boursier L."/>
            <person name="Brans A."/>
            <person name="Braun M."/>
            <person name="Brignell S.C."/>
            <person name="Bron S."/>
            <person name="Brouillet S."/>
            <person name="Bruschi C.V."/>
            <person name="Caldwell B."/>
            <person name="Capuano V."/>
            <person name="Carter N.M."/>
            <person name="Choi S.-K."/>
            <person name="Codani J.-J."/>
            <person name="Connerton I.F."/>
            <person name="Cummings N.J."/>
            <person name="Daniel R.A."/>
            <person name="Denizot F."/>
            <person name="Devine K.M."/>
            <person name="Duesterhoeft A."/>
            <person name="Ehrlich S.D."/>
            <person name="Emmerson P.T."/>
            <person name="Entian K.-D."/>
            <person name="Errington J."/>
            <person name="Fabret C."/>
            <person name="Ferrari E."/>
            <person name="Foulger D."/>
            <person name="Fritz C."/>
            <person name="Fujita M."/>
            <person name="Fujita Y."/>
            <person name="Fuma S."/>
            <person name="Galizzi A."/>
            <person name="Galleron N."/>
            <person name="Ghim S.-Y."/>
            <person name="Glaser P."/>
            <person name="Goffeau A."/>
            <person name="Golightly E.J."/>
            <person name="Grandi G."/>
            <person name="Guiseppi G."/>
            <person name="Guy B.J."/>
            <person name="Haga K."/>
            <person name="Haiech J."/>
            <person name="Harwood C.R."/>
            <person name="Henaut A."/>
            <person name="Hilbert H."/>
            <person name="Holsappel S."/>
            <person name="Hosono S."/>
            <person name="Hullo M.-F."/>
            <person name="Itaya M."/>
            <person name="Jones L.-M."/>
            <person name="Joris B."/>
            <person name="Karamata D."/>
            <person name="Kasahara Y."/>
            <person name="Klaerr-Blanchard M."/>
            <person name="Klein C."/>
            <person name="Kobayashi Y."/>
            <person name="Koetter P."/>
            <person name="Koningstein G."/>
            <person name="Krogh S."/>
            <person name="Kumano M."/>
            <person name="Kurita K."/>
            <person name="Lapidus A."/>
            <person name="Lardinois S."/>
            <person name="Lauber J."/>
            <person name="Lazarevic V."/>
            <person name="Lee S.-M."/>
            <person name="Levine A."/>
            <person name="Liu H."/>
            <person name="Masuda S."/>
            <person name="Mauel C."/>
            <person name="Medigue C."/>
            <person name="Medina N."/>
            <person name="Mellado R.P."/>
            <person name="Mizuno M."/>
            <person name="Moestl D."/>
            <person name="Nakai S."/>
            <person name="Noback M."/>
            <person name="Noone D."/>
            <person name="O'Reilly M."/>
            <person name="Ogawa K."/>
            <person name="Ogiwara A."/>
            <person name="Oudega B."/>
            <person name="Park S.-H."/>
            <person name="Parro V."/>
            <person name="Pohl T.M."/>
            <person name="Portetelle D."/>
            <person name="Porwollik S."/>
            <person name="Prescott A.M."/>
            <person name="Presecan E."/>
            <person name="Pujic P."/>
            <person name="Purnelle B."/>
            <person name="Rapoport G."/>
            <person name="Rey M."/>
            <person name="Reynolds S."/>
            <person name="Rieger M."/>
            <person name="Rivolta C."/>
            <person name="Rocha E."/>
            <person name="Roche B."/>
            <person name="Rose M."/>
            <person name="Sadaie Y."/>
            <person name="Sato T."/>
            <person name="Scanlan E."/>
            <person name="Schleich S."/>
            <person name="Schroeter R."/>
            <person name="Scoffone F."/>
            <person name="Sekiguchi J."/>
            <person name="Sekowska A."/>
            <person name="Seror S.J."/>
            <person name="Serror P."/>
            <person name="Shin B.-S."/>
            <person name="Soldo B."/>
            <person name="Sorokin A."/>
            <person name="Tacconi E."/>
            <person name="Takagi T."/>
            <person name="Takahashi H."/>
            <person name="Takemaru K."/>
            <person name="Takeuchi M."/>
            <person name="Tamakoshi A."/>
            <person name="Tanaka T."/>
            <person name="Terpstra P."/>
            <person name="Tognoni A."/>
            <person name="Tosato V."/>
            <person name="Uchiyama S."/>
            <person name="Vandenbol M."/>
            <person name="Vannier F."/>
            <person name="Vassarotti A."/>
            <person name="Viari A."/>
            <person name="Wambutt R."/>
            <person name="Wedler E."/>
            <person name="Wedler H."/>
            <person name="Weitzenegger T."/>
            <person name="Winters P."/>
            <person name="Wipat A."/>
            <person name="Yamamoto H."/>
            <person name="Yamane K."/>
            <person name="Yasumoto K."/>
            <person name="Yata K."/>
            <person name="Yoshida K."/>
            <person name="Yoshikawa H.-F."/>
            <person name="Zumstein E."/>
            <person name="Yoshikawa H."/>
            <person name="Danchin A."/>
        </authorList>
    </citation>
    <scope>NUCLEOTIDE SEQUENCE [LARGE SCALE GENOMIC DNA]</scope>
    <source>
        <strain>168</strain>
    </source>
</reference>
<reference key="3">
    <citation type="journal article" date="2001" name="J. Bacteriol.">
        <title>RNA expression analysis using an antisense Bacillus subtilis genome array.</title>
        <authorList>
            <person name="Lee J.M."/>
            <person name="Zhang S."/>
            <person name="Saha S."/>
            <person name="Santa Anna S."/>
            <person name="Jiang C."/>
            <person name="Perkins J."/>
        </authorList>
    </citation>
    <scope>INDUCTION</scope>
    <scope>PROBABLE OPERON STRUCTURE</scope>
    <source>
        <strain>168 / PY79</strain>
    </source>
</reference>
<reference key="4">
    <citation type="journal article" date="2002" name="Genome Res.">
        <title>Conservation of the biotin regulon and the BirA regulatory signal in Eubacteria and Archaea.</title>
        <authorList>
            <person name="Rodionov D.A."/>
            <person name="Mironov A.A."/>
            <person name="Gelfand M.S."/>
        </authorList>
    </citation>
    <scope>IDENTIFICATION</scope>
</reference>
<feature type="chain" id="PRO_0000360645" description="Probable biotin transporter BioY">
    <location>
        <begin position="1"/>
        <end position="186"/>
    </location>
</feature>
<feature type="transmembrane region" description="Helical" evidence="2">
    <location>
        <begin position="10"/>
        <end position="30"/>
    </location>
</feature>
<feature type="transmembrane region" description="Helical" evidence="2">
    <location>
        <begin position="54"/>
        <end position="74"/>
    </location>
</feature>
<feature type="transmembrane region" description="Helical" evidence="2">
    <location>
        <begin position="80"/>
        <end position="100"/>
    </location>
</feature>
<feature type="transmembrane region" description="Helical" evidence="2">
    <location>
        <begin position="119"/>
        <end position="139"/>
    </location>
</feature>
<feature type="transmembrane region" description="Helical" evidence="2">
    <location>
        <begin position="149"/>
        <end position="169"/>
    </location>
</feature>
<sequence>MLKLIDMMHIAIFTALMAVLGFMPPLFLSFTPVPITLQTLGVMLAGSILRPKSAFLSQLVFLLLVAFGAPLLPGGRGGFGVFFGPSAGFLIAYPLASWLISLAANRLRKVTVLRLFFTHIVFGIIFIYLLGIPVQAFIMHIDLSQAAFMSLAYVPGDLIKAAVSAFLAIKITQALSLSDTMFTKGG</sequence>